<protein>
    <recommendedName>
        <fullName evidence="1">Orotidine 5'-phosphate decarboxylase</fullName>
        <ecNumber evidence="1">4.1.1.23</ecNumber>
    </recommendedName>
    <alternativeName>
        <fullName evidence="1">OMP decarboxylase</fullName>
        <shortName evidence="1">OMPDCase</shortName>
        <shortName evidence="1">OMPdecase</shortName>
    </alternativeName>
</protein>
<name>PYRF_PROMS</name>
<gene>
    <name evidence="1" type="primary">pyrF</name>
    <name type="ordered locus">A9601_15281</name>
</gene>
<keyword id="KW-0210">Decarboxylase</keyword>
<keyword id="KW-0456">Lyase</keyword>
<keyword id="KW-0665">Pyrimidine biosynthesis</keyword>
<dbReference type="EC" id="4.1.1.23" evidence="1"/>
<dbReference type="EMBL" id="CP000551">
    <property type="protein sequence ID" value="ABM70811.1"/>
    <property type="molecule type" value="Genomic_DNA"/>
</dbReference>
<dbReference type="RefSeq" id="WP_011818944.1">
    <property type="nucleotide sequence ID" value="NC_008816.1"/>
</dbReference>
<dbReference type="SMR" id="A2BSQ0"/>
<dbReference type="STRING" id="146891.A9601_15281"/>
<dbReference type="KEGG" id="pmb:A9601_15281"/>
<dbReference type="eggNOG" id="COG0284">
    <property type="taxonomic scope" value="Bacteria"/>
</dbReference>
<dbReference type="HOGENOM" id="CLU_067069_1_0_3"/>
<dbReference type="OrthoDB" id="9806203at2"/>
<dbReference type="UniPathway" id="UPA00070">
    <property type="reaction ID" value="UER00120"/>
</dbReference>
<dbReference type="Proteomes" id="UP000002590">
    <property type="component" value="Chromosome"/>
</dbReference>
<dbReference type="GO" id="GO:0005829">
    <property type="term" value="C:cytosol"/>
    <property type="evidence" value="ECO:0007669"/>
    <property type="project" value="TreeGrafter"/>
</dbReference>
<dbReference type="GO" id="GO:0004590">
    <property type="term" value="F:orotidine-5'-phosphate decarboxylase activity"/>
    <property type="evidence" value="ECO:0007669"/>
    <property type="project" value="UniProtKB-UniRule"/>
</dbReference>
<dbReference type="GO" id="GO:0006207">
    <property type="term" value="P:'de novo' pyrimidine nucleobase biosynthetic process"/>
    <property type="evidence" value="ECO:0007669"/>
    <property type="project" value="InterPro"/>
</dbReference>
<dbReference type="GO" id="GO:0044205">
    <property type="term" value="P:'de novo' UMP biosynthetic process"/>
    <property type="evidence" value="ECO:0007669"/>
    <property type="project" value="UniProtKB-UniRule"/>
</dbReference>
<dbReference type="CDD" id="cd04725">
    <property type="entry name" value="OMP_decarboxylase_like"/>
    <property type="match status" value="1"/>
</dbReference>
<dbReference type="Gene3D" id="3.20.20.70">
    <property type="entry name" value="Aldolase class I"/>
    <property type="match status" value="1"/>
</dbReference>
<dbReference type="HAMAP" id="MF_01200_B">
    <property type="entry name" value="OMPdecase_type1_B"/>
    <property type="match status" value="1"/>
</dbReference>
<dbReference type="InterPro" id="IPR013785">
    <property type="entry name" value="Aldolase_TIM"/>
</dbReference>
<dbReference type="InterPro" id="IPR014732">
    <property type="entry name" value="OMPdecase"/>
</dbReference>
<dbReference type="InterPro" id="IPR018089">
    <property type="entry name" value="OMPdecase_AS"/>
</dbReference>
<dbReference type="InterPro" id="IPR047596">
    <property type="entry name" value="OMPdecase_bac"/>
</dbReference>
<dbReference type="InterPro" id="IPR001754">
    <property type="entry name" value="OMPdeCOase_dom"/>
</dbReference>
<dbReference type="InterPro" id="IPR011060">
    <property type="entry name" value="RibuloseP-bd_barrel"/>
</dbReference>
<dbReference type="NCBIfam" id="NF001273">
    <property type="entry name" value="PRK00230.1"/>
    <property type="match status" value="1"/>
</dbReference>
<dbReference type="NCBIfam" id="TIGR01740">
    <property type="entry name" value="pyrF"/>
    <property type="match status" value="1"/>
</dbReference>
<dbReference type="PANTHER" id="PTHR32119">
    <property type="entry name" value="OROTIDINE 5'-PHOSPHATE DECARBOXYLASE"/>
    <property type="match status" value="1"/>
</dbReference>
<dbReference type="PANTHER" id="PTHR32119:SF2">
    <property type="entry name" value="OROTIDINE 5'-PHOSPHATE DECARBOXYLASE"/>
    <property type="match status" value="1"/>
</dbReference>
<dbReference type="Pfam" id="PF00215">
    <property type="entry name" value="OMPdecase"/>
    <property type="match status" value="1"/>
</dbReference>
<dbReference type="SMART" id="SM00934">
    <property type="entry name" value="OMPdecase"/>
    <property type="match status" value="1"/>
</dbReference>
<dbReference type="SUPFAM" id="SSF51366">
    <property type="entry name" value="Ribulose-phoshate binding barrel"/>
    <property type="match status" value="1"/>
</dbReference>
<dbReference type="PROSITE" id="PS00156">
    <property type="entry name" value="OMPDECASE"/>
    <property type="match status" value="1"/>
</dbReference>
<reference key="1">
    <citation type="journal article" date="2007" name="PLoS Genet.">
        <title>Patterns and implications of gene gain and loss in the evolution of Prochlorococcus.</title>
        <authorList>
            <person name="Kettler G.C."/>
            <person name="Martiny A.C."/>
            <person name="Huang K."/>
            <person name="Zucker J."/>
            <person name="Coleman M.L."/>
            <person name="Rodrigue S."/>
            <person name="Chen F."/>
            <person name="Lapidus A."/>
            <person name="Ferriera S."/>
            <person name="Johnson J."/>
            <person name="Steglich C."/>
            <person name="Church G.M."/>
            <person name="Richardson P."/>
            <person name="Chisholm S.W."/>
        </authorList>
    </citation>
    <scope>NUCLEOTIDE SEQUENCE [LARGE SCALE GENOMIC DNA]</scope>
    <source>
        <strain>AS9601</strain>
    </source>
</reference>
<accession>A2BSQ0</accession>
<feature type="chain" id="PRO_1000065930" description="Orotidine 5'-phosphate decarboxylase">
    <location>
        <begin position="1"/>
        <end position="242"/>
    </location>
</feature>
<feature type="active site" description="Proton donor" evidence="1">
    <location>
        <position position="66"/>
    </location>
</feature>
<feature type="binding site" evidence="1">
    <location>
        <position position="16"/>
    </location>
    <ligand>
        <name>substrate</name>
    </ligand>
</feature>
<feature type="binding site" evidence="1">
    <location>
        <position position="37"/>
    </location>
    <ligand>
        <name>substrate</name>
    </ligand>
</feature>
<feature type="binding site" evidence="1">
    <location>
        <begin position="64"/>
        <end position="73"/>
    </location>
    <ligand>
        <name>substrate</name>
    </ligand>
</feature>
<feature type="binding site" evidence="1">
    <location>
        <position position="128"/>
    </location>
    <ligand>
        <name>substrate</name>
    </ligand>
</feature>
<feature type="binding site" evidence="1">
    <location>
        <position position="190"/>
    </location>
    <ligand>
        <name>substrate</name>
    </ligand>
</feature>
<feature type="binding site" evidence="1">
    <location>
        <position position="199"/>
    </location>
    <ligand>
        <name>substrate</name>
    </ligand>
</feature>
<feature type="binding site" evidence="1">
    <location>
        <position position="219"/>
    </location>
    <ligand>
        <name>substrate</name>
    </ligand>
</feature>
<feature type="binding site" evidence="1">
    <location>
        <position position="220"/>
    </location>
    <ligand>
        <name>substrate</name>
    </ligand>
</feature>
<proteinExistence type="inferred from homology"/>
<comment type="function">
    <text evidence="1">Catalyzes the decarboxylation of orotidine 5'-monophosphate (OMP) to uridine 5'-monophosphate (UMP).</text>
</comment>
<comment type="catalytic activity">
    <reaction evidence="1">
        <text>orotidine 5'-phosphate + H(+) = UMP + CO2</text>
        <dbReference type="Rhea" id="RHEA:11596"/>
        <dbReference type="ChEBI" id="CHEBI:15378"/>
        <dbReference type="ChEBI" id="CHEBI:16526"/>
        <dbReference type="ChEBI" id="CHEBI:57538"/>
        <dbReference type="ChEBI" id="CHEBI:57865"/>
        <dbReference type="EC" id="4.1.1.23"/>
    </reaction>
</comment>
<comment type="pathway">
    <text evidence="1">Pyrimidine metabolism; UMP biosynthesis via de novo pathway; UMP from orotate: step 2/2.</text>
</comment>
<comment type="subunit">
    <text evidence="1">Homodimer.</text>
</comment>
<comment type="similarity">
    <text evidence="1">Belongs to the OMP decarboxylase family. Type 1 subfamily.</text>
</comment>
<sequence>MNKRFNSEDKIILAIDGLDLSQAKLLLEKCPHVKWVKVGLELFVREGPRVIEILKGLNKKIFLDLKFHDIPNTMSAACFQVSKLGVDIISIHASAGLKALKDSKKASLEGATSVSVKPPFVVGITVLTSFSLKDFQTDLDRNNSIEENVLRLAKLSFDAGLDGCVCSPWEVKMLRSNYKNNFELITPGIRLNIDSKDDQNRIMTPHEAIDNGASKLVIGRSISKAIDPNMALIEIFKSIDSD</sequence>
<evidence type="ECO:0000255" key="1">
    <source>
        <dbReference type="HAMAP-Rule" id="MF_01200"/>
    </source>
</evidence>
<organism>
    <name type="scientific">Prochlorococcus marinus (strain AS9601)</name>
    <dbReference type="NCBI Taxonomy" id="146891"/>
    <lineage>
        <taxon>Bacteria</taxon>
        <taxon>Bacillati</taxon>
        <taxon>Cyanobacteriota</taxon>
        <taxon>Cyanophyceae</taxon>
        <taxon>Synechococcales</taxon>
        <taxon>Prochlorococcaceae</taxon>
        <taxon>Prochlorococcus</taxon>
    </lineage>
</organism>